<protein>
    <recommendedName>
        <fullName evidence="1">Large ribosomal subunit protein uL11</fullName>
    </recommendedName>
    <alternativeName>
        <fullName evidence="2">50S ribosomal protein L11</fullName>
    </alternativeName>
</protein>
<feature type="chain" id="PRO_1000212792" description="Large ribosomal subunit protein uL11">
    <location>
        <begin position="1"/>
        <end position="170"/>
    </location>
</feature>
<comment type="function">
    <text evidence="1">Forms part of the ribosomal stalk which helps the ribosome interact with GTP-bound translation factors.</text>
</comment>
<comment type="subunit">
    <text evidence="1">Part of the ribosomal stalk of the 50S ribosomal subunit. Interacts with L10 and the large rRNA to form the base of the stalk. L10 forms an elongated spine to which L12 dimers bind in a sequential fashion forming a multimeric L10(L12)X complex.</text>
</comment>
<comment type="similarity">
    <text evidence="1">Belongs to the universal ribosomal protein uL11 family.</text>
</comment>
<reference key="1">
    <citation type="journal article" date="2009" name="Proc. Natl. Acad. Sci. U.S.A.">
        <title>Biogeography of the Sulfolobus islandicus pan-genome.</title>
        <authorList>
            <person name="Reno M.L."/>
            <person name="Held N.L."/>
            <person name="Fields C.J."/>
            <person name="Burke P.V."/>
            <person name="Whitaker R.J."/>
        </authorList>
    </citation>
    <scope>NUCLEOTIDE SEQUENCE [LARGE SCALE GENOMIC DNA]</scope>
    <source>
        <strain>Y.N.15.51 / Yellowstone #2</strain>
    </source>
</reference>
<organism>
    <name type="scientific">Saccharolobus islandicus (strain Y.N.15.51 / Yellowstone #2)</name>
    <name type="common">Sulfolobus islandicus</name>
    <dbReference type="NCBI Taxonomy" id="419942"/>
    <lineage>
        <taxon>Archaea</taxon>
        <taxon>Thermoproteota</taxon>
        <taxon>Thermoprotei</taxon>
        <taxon>Sulfolobales</taxon>
        <taxon>Sulfolobaceae</taxon>
        <taxon>Saccharolobus</taxon>
    </lineage>
</organism>
<proteinExistence type="inferred from homology"/>
<sequence>MPTKSIKIMVEGGNVKPGPPLAPTLSQLGLNVGEVVKKLNEATSSFKGMSVPVTIEVDSNTKKYEIKVGIPTTTALLLKEAGASEPSGDPAHKKIGNLSLEQVIKIVIMKKPGLTTKSLKAAVKSMLGTAKSIGVTVENKDPKELVKEVEEGKYDDLLAKYENEWNEVKE</sequence>
<name>RL11_SACI1</name>
<gene>
    <name evidence="1" type="primary">rpl11</name>
    <name type="ordered locus">YN1551_1048</name>
</gene>
<evidence type="ECO:0000255" key="1">
    <source>
        <dbReference type="HAMAP-Rule" id="MF_00736"/>
    </source>
</evidence>
<evidence type="ECO:0000305" key="2"/>
<dbReference type="EMBL" id="CP001404">
    <property type="protein sequence ID" value="ACP48155.1"/>
    <property type="molecule type" value="Genomic_DNA"/>
</dbReference>
<dbReference type="RefSeq" id="WP_012717315.1">
    <property type="nucleotide sequence ID" value="NC_012623.1"/>
</dbReference>
<dbReference type="SMR" id="C3NG95"/>
<dbReference type="GeneID" id="7809661"/>
<dbReference type="KEGG" id="sin:YN1551_1048"/>
<dbReference type="HOGENOM" id="CLU_074237_4_0_2"/>
<dbReference type="Proteomes" id="UP000006818">
    <property type="component" value="Chromosome"/>
</dbReference>
<dbReference type="GO" id="GO:0015934">
    <property type="term" value="C:large ribosomal subunit"/>
    <property type="evidence" value="ECO:0007669"/>
    <property type="project" value="TreeGrafter"/>
</dbReference>
<dbReference type="GO" id="GO:0070180">
    <property type="term" value="F:large ribosomal subunit rRNA binding"/>
    <property type="evidence" value="ECO:0007669"/>
    <property type="project" value="UniProtKB-UniRule"/>
</dbReference>
<dbReference type="GO" id="GO:0003735">
    <property type="term" value="F:structural constituent of ribosome"/>
    <property type="evidence" value="ECO:0007669"/>
    <property type="project" value="InterPro"/>
</dbReference>
<dbReference type="GO" id="GO:0006412">
    <property type="term" value="P:translation"/>
    <property type="evidence" value="ECO:0007669"/>
    <property type="project" value="UniProtKB-UniRule"/>
</dbReference>
<dbReference type="CDD" id="cd00349">
    <property type="entry name" value="Ribosomal_L11"/>
    <property type="match status" value="1"/>
</dbReference>
<dbReference type="FunFam" id="1.10.10.250:FF:000006">
    <property type="entry name" value="50S ribosomal protein L11"/>
    <property type="match status" value="1"/>
</dbReference>
<dbReference type="FunFam" id="3.30.1550.10:FF:000007">
    <property type="entry name" value="50S ribosomal protein L11"/>
    <property type="match status" value="1"/>
</dbReference>
<dbReference type="Gene3D" id="1.10.10.250">
    <property type="entry name" value="Ribosomal protein L11, C-terminal domain"/>
    <property type="match status" value="1"/>
</dbReference>
<dbReference type="Gene3D" id="3.30.1550.10">
    <property type="entry name" value="Ribosomal protein L11/L12, N-terminal domain"/>
    <property type="match status" value="1"/>
</dbReference>
<dbReference type="HAMAP" id="MF_00736">
    <property type="entry name" value="Ribosomal_uL11"/>
    <property type="match status" value="1"/>
</dbReference>
<dbReference type="InterPro" id="IPR000911">
    <property type="entry name" value="Ribosomal_uL11"/>
</dbReference>
<dbReference type="InterPro" id="IPR020783">
    <property type="entry name" value="Ribosomal_uL11_C"/>
</dbReference>
<dbReference type="InterPro" id="IPR036769">
    <property type="entry name" value="Ribosomal_uL11_C_sf"/>
</dbReference>
<dbReference type="InterPro" id="IPR020785">
    <property type="entry name" value="Ribosomal_uL11_CS"/>
</dbReference>
<dbReference type="InterPro" id="IPR020784">
    <property type="entry name" value="Ribosomal_uL11_N"/>
</dbReference>
<dbReference type="InterPro" id="IPR036796">
    <property type="entry name" value="Ribosomal_uL11_N_sf"/>
</dbReference>
<dbReference type="NCBIfam" id="NF002232">
    <property type="entry name" value="PRK01143.1"/>
    <property type="match status" value="1"/>
</dbReference>
<dbReference type="PANTHER" id="PTHR11661">
    <property type="entry name" value="60S RIBOSOMAL PROTEIN L12"/>
    <property type="match status" value="1"/>
</dbReference>
<dbReference type="PANTHER" id="PTHR11661:SF1">
    <property type="entry name" value="LARGE RIBOSOMAL SUBUNIT PROTEIN UL11M"/>
    <property type="match status" value="1"/>
</dbReference>
<dbReference type="Pfam" id="PF00298">
    <property type="entry name" value="Ribosomal_L11"/>
    <property type="match status" value="1"/>
</dbReference>
<dbReference type="Pfam" id="PF03946">
    <property type="entry name" value="Ribosomal_L11_N"/>
    <property type="match status" value="1"/>
</dbReference>
<dbReference type="SMART" id="SM00649">
    <property type="entry name" value="RL11"/>
    <property type="match status" value="1"/>
</dbReference>
<dbReference type="SUPFAM" id="SSF54747">
    <property type="entry name" value="Ribosomal L11/L12e N-terminal domain"/>
    <property type="match status" value="1"/>
</dbReference>
<dbReference type="SUPFAM" id="SSF46906">
    <property type="entry name" value="Ribosomal protein L11, C-terminal domain"/>
    <property type="match status" value="1"/>
</dbReference>
<dbReference type="PROSITE" id="PS00359">
    <property type="entry name" value="RIBOSOMAL_L11"/>
    <property type="match status" value="1"/>
</dbReference>
<keyword id="KW-0687">Ribonucleoprotein</keyword>
<keyword id="KW-0689">Ribosomal protein</keyword>
<keyword id="KW-0694">RNA-binding</keyword>
<keyword id="KW-0699">rRNA-binding</keyword>
<accession>C3NG95</accession>